<reference key="1">
    <citation type="journal article" date="2009" name="Appl. Environ. Microbiol.">
        <title>Three genomes from the phylum Acidobacteria provide insight into the lifestyles of these microorganisms in soils.</title>
        <authorList>
            <person name="Ward N.L."/>
            <person name="Challacombe J.F."/>
            <person name="Janssen P.H."/>
            <person name="Henrissat B."/>
            <person name="Coutinho P.M."/>
            <person name="Wu M."/>
            <person name="Xie G."/>
            <person name="Haft D.H."/>
            <person name="Sait M."/>
            <person name="Badger J."/>
            <person name="Barabote R.D."/>
            <person name="Bradley B."/>
            <person name="Brettin T.S."/>
            <person name="Brinkac L.M."/>
            <person name="Bruce D."/>
            <person name="Creasy T."/>
            <person name="Daugherty S.C."/>
            <person name="Davidsen T.M."/>
            <person name="DeBoy R.T."/>
            <person name="Detter J.C."/>
            <person name="Dodson R.J."/>
            <person name="Durkin A.S."/>
            <person name="Ganapathy A."/>
            <person name="Gwinn-Giglio M."/>
            <person name="Han C.S."/>
            <person name="Khouri H."/>
            <person name="Kiss H."/>
            <person name="Kothari S.P."/>
            <person name="Madupu R."/>
            <person name="Nelson K.E."/>
            <person name="Nelson W.C."/>
            <person name="Paulsen I."/>
            <person name="Penn K."/>
            <person name="Ren Q."/>
            <person name="Rosovitz M.J."/>
            <person name="Selengut J.D."/>
            <person name="Shrivastava S."/>
            <person name="Sullivan S.A."/>
            <person name="Tapia R."/>
            <person name="Thompson L.S."/>
            <person name="Watkins K.L."/>
            <person name="Yang Q."/>
            <person name="Yu C."/>
            <person name="Zafar N."/>
            <person name="Zhou L."/>
            <person name="Kuske C.R."/>
        </authorList>
    </citation>
    <scope>NUCLEOTIDE SEQUENCE [LARGE SCALE GENOMIC DNA]</scope>
    <source>
        <strain>Ellin6076</strain>
    </source>
</reference>
<dbReference type="EMBL" id="CP000473">
    <property type="protein sequence ID" value="ABJ86063.1"/>
    <property type="molecule type" value="Genomic_DNA"/>
</dbReference>
<dbReference type="SMR" id="Q01WA2"/>
<dbReference type="FunCoup" id="Q01WA2">
    <property type="interactions" value="687"/>
</dbReference>
<dbReference type="STRING" id="234267.Acid_5108"/>
<dbReference type="KEGG" id="sus:Acid_5108"/>
<dbReference type="eggNOG" id="COG0093">
    <property type="taxonomic scope" value="Bacteria"/>
</dbReference>
<dbReference type="HOGENOM" id="CLU_095071_2_1_0"/>
<dbReference type="InParanoid" id="Q01WA2"/>
<dbReference type="OrthoDB" id="9806379at2"/>
<dbReference type="GO" id="GO:0022625">
    <property type="term" value="C:cytosolic large ribosomal subunit"/>
    <property type="evidence" value="ECO:0007669"/>
    <property type="project" value="TreeGrafter"/>
</dbReference>
<dbReference type="GO" id="GO:0070180">
    <property type="term" value="F:large ribosomal subunit rRNA binding"/>
    <property type="evidence" value="ECO:0007669"/>
    <property type="project" value="TreeGrafter"/>
</dbReference>
<dbReference type="GO" id="GO:0003735">
    <property type="term" value="F:structural constituent of ribosome"/>
    <property type="evidence" value="ECO:0007669"/>
    <property type="project" value="InterPro"/>
</dbReference>
<dbReference type="GO" id="GO:0006412">
    <property type="term" value="P:translation"/>
    <property type="evidence" value="ECO:0007669"/>
    <property type="project" value="UniProtKB-UniRule"/>
</dbReference>
<dbReference type="CDD" id="cd00337">
    <property type="entry name" value="Ribosomal_uL14"/>
    <property type="match status" value="1"/>
</dbReference>
<dbReference type="Gene3D" id="2.40.150.20">
    <property type="entry name" value="Ribosomal protein L14"/>
    <property type="match status" value="1"/>
</dbReference>
<dbReference type="HAMAP" id="MF_01367">
    <property type="entry name" value="Ribosomal_uL14"/>
    <property type="match status" value="1"/>
</dbReference>
<dbReference type="InterPro" id="IPR000218">
    <property type="entry name" value="Ribosomal_uL14"/>
</dbReference>
<dbReference type="InterPro" id="IPR005745">
    <property type="entry name" value="Ribosomal_uL14_bac-type"/>
</dbReference>
<dbReference type="InterPro" id="IPR036853">
    <property type="entry name" value="Ribosomal_uL14_sf"/>
</dbReference>
<dbReference type="NCBIfam" id="TIGR01067">
    <property type="entry name" value="rplN_bact"/>
    <property type="match status" value="1"/>
</dbReference>
<dbReference type="PANTHER" id="PTHR11761">
    <property type="entry name" value="50S/60S RIBOSOMAL PROTEIN L14/L23"/>
    <property type="match status" value="1"/>
</dbReference>
<dbReference type="PANTHER" id="PTHR11761:SF3">
    <property type="entry name" value="LARGE RIBOSOMAL SUBUNIT PROTEIN UL14M"/>
    <property type="match status" value="1"/>
</dbReference>
<dbReference type="Pfam" id="PF00238">
    <property type="entry name" value="Ribosomal_L14"/>
    <property type="match status" value="1"/>
</dbReference>
<dbReference type="SMART" id="SM01374">
    <property type="entry name" value="Ribosomal_L14"/>
    <property type="match status" value="1"/>
</dbReference>
<dbReference type="SUPFAM" id="SSF50193">
    <property type="entry name" value="Ribosomal protein L14"/>
    <property type="match status" value="1"/>
</dbReference>
<organism>
    <name type="scientific">Solibacter usitatus (strain Ellin6076)</name>
    <dbReference type="NCBI Taxonomy" id="234267"/>
    <lineage>
        <taxon>Bacteria</taxon>
        <taxon>Pseudomonadati</taxon>
        <taxon>Acidobacteriota</taxon>
        <taxon>Terriglobia</taxon>
        <taxon>Bryobacterales</taxon>
        <taxon>Solibacteraceae</taxon>
        <taxon>Candidatus Solibacter</taxon>
    </lineage>
</organism>
<gene>
    <name evidence="1" type="primary">rplN</name>
    <name type="ordered locus">Acid_5108</name>
</gene>
<accession>Q01WA2</accession>
<name>RL14_SOLUE</name>
<sequence>MIGMRTILEVADNSGARRLSCILPRGGDLGLRAGLGDVVTAAVKEAAPDSAIKKGKVVRCVIVRMRKETRRKDGTYIRFDSNAAVLINDVGEPVGTRVFGPVARELRDKKFMKIVSLAPEVI</sequence>
<comment type="function">
    <text evidence="1">Binds to 23S rRNA. Forms part of two intersubunit bridges in the 70S ribosome.</text>
</comment>
<comment type="subunit">
    <text evidence="1">Part of the 50S ribosomal subunit. Forms a cluster with proteins L3 and L19. In the 70S ribosome, L14 and L19 interact and together make contacts with the 16S rRNA in bridges B5 and B8.</text>
</comment>
<comment type="similarity">
    <text evidence="1">Belongs to the universal ribosomal protein uL14 family.</text>
</comment>
<feature type="chain" id="PRO_0000355837" description="Large ribosomal subunit protein uL14">
    <location>
        <begin position="1"/>
        <end position="122"/>
    </location>
</feature>
<evidence type="ECO:0000255" key="1">
    <source>
        <dbReference type="HAMAP-Rule" id="MF_01367"/>
    </source>
</evidence>
<evidence type="ECO:0000305" key="2"/>
<protein>
    <recommendedName>
        <fullName evidence="1">Large ribosomal subunit protein uL14</fullName>
    </recommendedName>
    <alternativeName>
        <fullName evidence="2">50S ribosomal protein L14</fullName>
    </alternativeName>
</protein>
<proteinExistence type="inferred from homology"/>
<keyword id="KW-0687">Ribonucleoprotein</keyword>
<keyword id="KW-0689">Ribosomal protein</keyword>
<keyword id="KW-0694">RNA-binding</keyword>
<keyword id="KW-0699">rRNA-binding</keyword>